<gene>
    <name evidence="1" type="primary">metK</name>
    <name type="ordered locus">Cthe_2251</name>
</gene>
<protein>
    <recommendedName>
        <fullName evidence="1">S-adenosylmethionine synthase</fullName>
        <shortName evidence="1">AdoMet synthase</shortName>
        <ecNumber evidence="1">2.5.1.6</ecNumber>
    </recommendedName>
    <alternativeName>
        <fullName evidence="1">MAT</fullName>
    </alternativeName>
    <alternativeName>
        <fullName evidence="1">Methionine adenosyltransferase</fullName>
    </alternativeName>
</protein>
<reference key="1">
    <citation type="submission" date="2007-02" db="EMBL/GenBank/DDBJ databases">
        <title>Complete sequence of Clostridium thermocellum ATCC 27405.</title>
        <authorList>
            <consortium name="US DOE Joint Genome Institute"/>
            <person name="Copeland A."/>
            <person name="Lucas S."/>
            <person name="Lapidus A."/>
            <person name="Barry K."/>
            <person name="Detter J.C."/>
            <person name="Glavina del Rio T."/>
            <person name="Hammon N."/>
            <person name="Israni S."/>
            <person name="Dalin E."/>
            <person name="Tice H."/>
            <person name="Pitluck S."/>
            <person name="Chertkov O."/>
            <person name="Brettin T."/>
            <person name="Bruce D."/>
            <person name="Han C."/>
            <person name="Tapia R."/>
            <person name="Gilna P."/>
            <person name="Schmutz J."/>
            <person name="Larimer F."/>
            <person name="Land M."/>
            <person name="Hauser L."/>
            <person name="Kyrpides N."/>
            <person name="Mikhailova N."/>
            <person name="Wu J.H.D."/>
            <person name="Newcomb M."/>
            <person name="Richardson P."/>
        </authorList>
    </citation>
    <scope>NUCLEOTIDE SEQUENCE [LARGE SCALE GENOMIC DNA]</scope>
    <source>
        <strain>ATCC 27405 / DSM 1237 / JCM 9322 / NBRC 103400 / NCIMB 10682 / NRRL B-4536 / VPI 7372</strain>
    </source>
</reference>
<proteinExistence type="inferred from homology"/>
<keyword id="KW-0067">ATP-binding</keyword>
<keyword id="KW-0963">Cytoplasm</keyword>
<keyword id="KW-0460">Magnesium</keyword>
<keyword id="KW-0479">Metal-binding</keyword>
<keyword id="KW-0547">Nucleotide-binding</keyword>
<keyword id="KW-0554">One-carbon metabolism</keyword>
<keyword id="KW-0630">Potassium</keyword>
<keyword id="KW-1185">Reference proteome</keyword>
<keyword id="KW-0808">Transferase</keyword>
<organism>
    <name type="scientific">Acetivibrio thermocellus (strain ATCC 27405 / DSM 1237 / JCM 9322 / NBRC 103400 / NCIMB 10682 / NRRL B-4536 / VPI 7372)</name>
    <name type="common">Clostridium thermocellum</name>
    <dbReference type="NCBI Taxonomy" id="203119"/>
    <lineage>
        <taxon>Bacteria</taxon>
        <taxon>Bacillati</taxon>
        <taxon>Bacillota</taxon>
        <taxon>Clostridia</taxon>
        <taxon>Eubacteriales</taxon>
        <taxon>Oscillospiraceae</taxon>
        <taxon>Acetivibrio</taxon>
    </lineage>
</organism>
<dbReference type="EC" id="2.5.1.6" evidence="1"/>
<dbReference type="EMBL" id="CP000568">
    <property type="protein sequence ID" value="ABN53453.1"/>
    <property type="molecule type" value="Genomic_DNA"/>
</dbReference>
<dbReference type="RefSeq" id="WP_003518486.1">
    <property type="nucleotide sequence ID" value="NC_009012.1"/>
</dbReference>
<dbReference type="SMR" id="A3DHM4"/>
<dbReference type="STRING" id="203119.Cthe_2251"/>
<dbReference type="GeneID" id="35804961"/>
<dbReference type="KEGG" id="cth:Cthe_2251"/>
<dbReference type="eggNOG" id="COG0192">
    <property type="taxonomic scope" value="Bacteria"/>
</dbReference>
<dbReference type="HOGENOM" id="CLU_041802_1_1_9"/>
<dbReference type="OrthoDB" id="9801686at2"/>
<dbReference type="UniPathway" id="UPA00315">
    <property type="reaction ID" value="UER00080"/>
</dbReference>
<dbReference type="Proteomes" id="UP000002145">
    <property type="component" value="Chromosome"/>
</dbReference>
<dbReference type="GO" id="GO:0005737">
    <property type="term" value="C:cytoplasm"/>
    <property type="evidence" value="ECO:0007669"/>
    <property type="project" value="UniProtKB-SubCell"/>
</dbReference>
<dbReference type="GO" id="GO:0005524">
    <property type="term" value="F:ATP binding"/>
    <property type="evidence" value="ECO:0007669"/>
    <property type="project" value="UniProtKB-UniRule"/>
</dbReference>
<dbReference type="GO" id="GO:0000287">
    <property type="term" value="F:magnesium ion binding"/>
    <property type="evidence" value="ECO:0007669"/>
    <property type="project" value="UniProtKB-UniRule"/>
</dbReference>
<dbReference type="GO" id="GO:0004478">
    <property type="term" value="F:methionine adenosyltransferase activity"/>
    <property type="evidence" value="ECO:0007669"/>
    <property type="project" value="UniProtKB-UniRule"/>
</dbReference>
<dbReference type="GO" id="GO:0006730">
    <property type="term" value="P:one-carbon metabolic process"/>
    <property type="evidence" value="ECO:0007669"/>
    <property type="project" value="UniProtKB-KW"/>
</dbReference>
<dbReference type="GO" id="GO:0006556">
    <property type="term" value="P:S-adenosylmethionine biosynthetic process"/>
    <property type="evidence" value="ECO:0007669"/>
    <property type="project" value="UniProtKB-UniRule"/>
</dbReference>
<dbReference type="CDD" id="cd18079">
    <property type="entry name" value="S-AdoMet_synt"/>
    <property type="match status" value="1"/>
</dbReference>
<dbReference type="FunFam" id="3.30.300.10:FF:000003">
    <property type="entry name" value="S-adenosylmethionine synthase"/>
    <property type="match status" value="1"/>
</dbReference>
<dbReference type="FunFam" id="3.30.300.10:FF:000004">
    <property type="entry name" value="S-adenosylmethionine synthase"/>
    <property type="match status" value="1"/>
</dbReference>
<dbReference type="Gene3D" id="3.30.300.10">
    <property type="match status" value="3"/>
</dbReference>
<dbReference type="HAMAP" id="MF_00086">
    <property type="entry name" value="S_AdoMet_synth1"/>
    <property type="match status" value="1"/>
</dbReference>
<dbReference type="InterPro" id="IPR022631">
    <property type="entry name" value="ADOMET_SYNTHASE_CS"/>
</dbReference>
<dbReference type="InterPro" id="IPR022630">
    <property type="entry name" value="S-AdoMet_synt_C"/>
</dbReference>
<dbReference type="InterPro" id="IPR022629">
    <property type="entry name" value="S-AdoMet_synt_central"/>
</dbReference>
<dbReference type="InterPro" id="IPR022628">
    <property type="entry name" value="S-AdoMet_synt_N"/>
</dbReference>
<dbReference type="InterPro" id="IPR002133">
    <property type="entry name" value="S-AdoMet_synthetase"/>
</dbReference>
<dbReference type="InterPro" id="IPR022636">
    <property type="entry name" value="S-AdoMet_synthetase_sfam"/>
</dbReference>
<dbReference type="NCBIfam" id="TIGR01034">
    <property type="entry name" value="metK"/>
    <property type="match status" value="1"/>
</dbReference>
<dbReference type="PANTHER" id="PTHR11964">
    <property type="entry name" value="S-ADENOSYLMETHIONINE SYNTHETASE"/>
    <property type="match status" value="1"/>
</dbReference>
<dbReference type="Pfam" id="PF02773">
    <property type="entry name" value="S-AdoMet_synt_C"/>
    <property type="match status" value="1"/>
</dbReference>
<dbReference type="Pfam" id="PF02772">
    <property type="entry name" value="S-AdoMet_synt_M"/>
    <property type="match status" value="1"/>
</dbReference>
<dbReference type="Pfam" id="PF00438">
    <property type="entry name" value="S-AdoMet_synt_N"/>
    <property type="match status" value="1"/>
</dbReference>
<dbReference type="PIRSF" id="PIRSF000497">
    <property type="entry name" value="MAT"/>
    <property type="match status" value="1"/>
</dbReference>
<dbReference type="SUPFAM" id="SSF55973">
    <property type="entry name" value="S-adenosylmethionine synthetase"/>
    <property type="match status" value="3"/>
</dbReference>
<dbReference type="PROSITE" id="PS00376">
    <property type="entry name" value="ADOMET_SYNTHASE_1"/>
    <property type="match status" value="1"/>
</dbReference>
<dbReference type="PROSITE" id="PS00377">
    <property type="entry name" value="ADOMET_SYNTHASE_2"/>
    <property type="match status" value="1"/>
</dbReference>
<accession>A3DHM4</accession>
<evidence type="ECO:0000255" key="1">
    <source>
        <dbReference type="HAMAP-Rule" id="MF_00086"/>
    </source>
</evidence>
<feature type="chain" id="PRO_0000302908" description="S-adenosylmethionine synthase">
    <location>
        <begin position="1"/>
        <end position="397"/>
    </location>
</feature>
<feature type="region of interest" description="Flexible loop" evidence="1">
    <location>
        <begin position="99"/>
        <end position="109"/>
    </location>
</feature>
<feature type="binding site" description="in other chain" evidence="1">
    <location>
        <position position="15"/>
    </location>
    <ligand>
        <name>ATP</name>
        <dbReference type="ChEBI" id="CHEBI:30616"/>
        <note>ligand shared between two neighboring subunits</note>
    </ligand>
</feature>
<feature type="binding site" evidence="1">
    <location>
        <position position="17"/>
    </location>
    <ligand>
        <name>Mg(2+)</name>
        <dbReference type="ChEBI" id="CHEBI:18420"/>
    </ligand>
</feature>
<feature type="binding site" evidence="1">
    <location>
        <position position="43"/>
    </location>
    <ligand>
        <name>K(+)</name>
        <dbReference type="ChEBI" id="CHEBI:29103"/>
    </ligand>
</feature>
<feature type="binding site" description="in other chain" evidence="1">
    <location>
        <position position="56"/>
    </location>
    <ligand>
        <name>L-methionine</name>
        <dbReference type="ChEBI" id="CHEBI:57844"/>
        <note>ligand shared between two neighboring subunits</note>
    </ligand>
</feature>
<feature type="binding site" description="in other chain" evidence="1">
    <location>
        <position position="99"/>
    </location>
    <ligand>
        <name>L-methionine</name>
        <dbReference type="ChEBI" id="CHEBI:57844"/>
        <note>ligand shared between two neighboring subunits</note>
    </ligand>
</feature>
<feature type="binding site" description="in other chain" evidence="1">
    <location>
        <begin position="175"/>
        <end position="177"/>
    </location>
    <ligand>
        <name>ATP</name>
        <dbReference type="ChEBI" id="CHEBI:30616"/>
        <note>ligand shared between two neighboring subunits</note>
    </ligand>
</feature>
<feature type="binding site" description="in other chain" evidence="1">
    <location>
        <begin position="241"/>
        <end position="242"/>
    </location>
    <ligand>
        <name>ATP</name>
        <dbReference type="ChEBI" id="CHEBI:30616"/>
        <note>ligand shared between two neighboring subunits</note>
    </ligand>
</feature>
<feature type="binding site" evidence="1">
    <location>
        <position position="250"/>
    </location>
    <ligand>
        <name>ATP</name>
        <dbReference type="ChEBI" id="CHEBI:30616"/>
        <note>ligand shared between two neighboring subunits</note>
    </ligand>
</feature>
<feature type="binding site" evidence="1">
    <location>
        <position position="250"/>
    </location>
    <ligand>
        <name>L-methionine</name>
        <dbReference type="ChEBI" id="CHEBI:57844"/>
        <note>ligand shared between two neighboring subunits</note>
    </ligand>
</feature>
<feature type="binding site" description="in other chain" evidence="1">
    <location>
        <begin position="256"/>
        <end position="257"/>
    </location>
    <ligand>
        <name>ATP</name>
        <dbReference type="ChEBI" id="CHEBI:30616"/>
        <note>ligand shared between two neighboring subunits</note>
    </ligand>
</feature>
<feature type="binding site" evidence="1">
    <location>
        <position position="273"/>
    </location>
    <ligand>
        <name>ATP</name>
        <dbReference type="ChEBI" id="CHEBI:30616"/>
        <note>ligand shared between two neighboring subunits</note>
    </ligand>
</feature>
<feature type="binding site" evidence="1">
    <location>
        <position position="277"/>
    </location>
    <ligand>
        <name>ATP</name>
        <dbReference type="ChEBI" id="CHEBI:30616"/>
        <note>ligand shared between two neighboring subunits</note>
    </ligand>
</feature>
<feature type="binding site" description="in other chain" evidence="1">
    <location>
        <position position="281"/>
    </location>
    <ligand>
        <name>L-methionine</name>
        <dbReference type="ChEBI" id="CHEBI:57844"/>
        <note>ligand shared between two neighboring subunits</note>
    </ligand>
</feature>
<comment type="function">
    <text evidence="1">Catalyzes the formation of S-adenosylmethionine (AdoMet) from methionine and ATP. The overall synthetic reaction is composed of two sequential steps, AdoMet formation and the subsequent tripolyphosphate hydrolysis which occurs prior to release of AdoMet from the enzyme.</text>
</comment>
<comment type="catalytic activity">
    <reaction evidence="1">
        <text>L-methionine + ATP + H2O = S-adenosyl-L-methionine + phosphate + diphosphate</text>
        <dbReference type="Rhea" id="RHEA:21080"/>
        <dbReference type="ChEBI" id="CHEBI:15377"/>
        <dbReference type="ChEBI" id="CHEBI:30616"/>
        <dbReference type="ChEBI" id="CHEBI:33019"/>
        <dbReference type="ChEBI" id="CHEBI:43474"/>
        <dbReference type="ChEBI" id="CHEBI:57844"/>
        <dbReference type="ChEBI" id="CHEBI:59789"/>
        <dbReference type="EC" id="2.5.1.6"/>
    </reaction>
</comment>
<comment type="cofactor">
    <cofactor evidence="1">
        <name>Mg(2+)</name>
        <dbReference type="ChEBI" id="CHEBI:18420"/>
    </cofactor>
    <text evidence="1">Binds 2 divalent ions per subunit.</text>
</comment>
<comment type="cofactor">
    <cofactor evidence="1">
        <name>K(+)</name>
        <dbReference type="ChEBI" id="CHEBI:29103"/>
    </cofactor>
    <text evidence="1">Binds 1 potassium ion per subunit.</text>
</comment>
<comment type="pathway">
    <text evidence="1">Amino-acid biosynthesis; S-adenosyl-L-methionine biosynthesis; S-adenosyl-L-methionine from L-methionine: step 1/1.</text>
</comment>
<comment type="subunit">
    <text evidence="1">Homotetramer; dimer of dimers.</text>
</comment>
<comment type="subcellular location">
    <subcellularLocation>
        <location evidence="1">Cytoplasm</location>
    </subcellularLocation>
</comment>
<comment type="similarity">
    <text evidence="1">Belongs to the AdoMet synthase family.</text>
</comment>
<name>METK_ACET2</name>
<sequence length="397" mass="43386">MARKLFTSESVTEGHPDKICDQISDAVLDAIFSQDPMARVACETAVTTGLVLVTGEITTNCYVDIPKIVRSTIREIGYDRAKYGFDCDTCAVLTSIDEQSPDIAMGVNKALEAKTGEMSDEEIEAIGAGDQGMMFGFACDETPELMPMPISLAHKLAMRLSQVRKNGTLNYLRPDGKSQVTVEYDGDKPVRVDTVLISTQHGPEVDYDTIKRDVIEHVIKPVIPAELLDSKTKYLVNPTGRFVIGGPQGDSGLTGRKIIVDTYGGYARHGGGAFSGKDPTKVDRSAAYAARYVAKNIVAAGLARKCEVQLAYAIGVARPVSVRVDTFGTGIIPEEKIESLVNKYFDLRPAGIIKTLDLRRPIYKQTAAYGHFGRTDIDLPWERTDKAEELRKEAQSL</sequence>